<proteinExistence type="evidence at protein level"/>
<keyword id="KW-0128">Catecholamine metabolism</keyword>
<keyword id="KW-0963">Cytoplasm</keyword>
<keyword id="KW-0443">Lipid metabolism</keyword>
<keyword id="KW-0597">Phosphoprotein</keyword>
<keyword id="KW-1185">Reference proteome</keyword>
<keyword id="KW-0753">Steroid metabolism</keyword>
<keyword id="KW-0808">Transferase</keyword>
<protein>
    <recommendedName>
        <fullName>Sulfotransferase 1A1</fullName>
        <shortName>ST1A1</shortName>
        <ecNumber evidence="4">2.8.2.1</ecNumber>
    </recommendedName>
    <alternativeName>
        <fullName>Aryl sulfotransferase</fullName>
    </alternativeName>
    <alternativeName>
        <fullName>Phenol sulfotransferase</fullName>
    </alternativeName>
    <alternativeName>
        <fullName>Phenol-sulfating phenol sulfotransferase</fullName>
        <shortName>P-PST</shortName>
    </alternativeName>
</protein>
<sequence>MEDIPDTSRPPLKYVKGIPLIKYFAEALESLQDFQAQPDDLLISTYPKSGTTWVSEILDMIYQDGDVEKCRRAPVFIRVPFLEFKAPGIPTGLEVLKDTPAPRLIKTHLPLALLPQTLLDQKVKVVYVARNAKDVAVSYYHFYRMAKVHPDPDTWDSFLEKFMAGEVSYGSWYQHVQEWWELSHTHPVLYLFYEDMKENPKREIQKILKFVGRSLPEETVDLIVQHTSFKEMKNNSMANYTTLSPDIMDHSISAFMRKGISGDWKTTFTVAQNERFDADYAKKMEGCGLSFRTQL</sequence>
<comment type="function">
    <text evidence="2 3 4">Sulfotransferase that utilizes 3'-phospho-5'-adenylyl sulfate (PAPS) as sulfonate donor to catalyze the sulfate conjugation of a wide variety of acceptor molecules bearing a hydroxyl or an amine group (PubMed:12054462). Sulfonation increases the water solubility of most compounds, and therefore their renal excretion, but it can also result in bioactivation to form active metabolites. Displays broad substrate specificity for small phenolic compounds. Plays an important role in the sulfonation of endogenous molecules such as steroid hormones (By similarity). Mediates also the metabolic activation of carcinogenic N-hydroxyarylamines leading to highly reactive intermediates capable of forming DNA adducts, potentially resulting in mutagenesis (By similarity). May play a role in gut microbiota-host metabolic interaction. O-sulfonates 4-ethylphenol (4-EP), a dietary tyrosine-derived metabolite produced by gut bacteria. The product 4-EPS crosses the blood-brain barrier and may negatively regulate oligodendrocyte maturation and myelination, affecting the functional connectivity of different brain regions associated with the limbic system. Catalyzes the sulfate conjugation of dopamine. Catalyzes the sulfation of T4 (L-thyroxine/3,5,3',5'-tetraiodothyronine), T3 (3,5,3'-triiodothyronine), rT3 (3,3',5'-triiodothyronine) and 3,3'-T2 (3,3'-diiodothyronine), with a substrate preference of 3,3'-T2 &gt; rT3 &gt; T3 &gt; T4 (By similarity).</text>
</comment>
<comment type="catalytic activity">
    <reaction evidence="4">
        <text>a phenol + 3'-phosphoadenylyl sulfate = an aryl sulfate + adenosine 3',5'-bisphosphate + H(+)</text>
        <dbReference type="Rhea" id="RHEA:12164"/>
        <dbReference type="ChEBI" id="CHEBI:15378"/>
        <dbReference type="ChEBI" id="CHEBI:33853"/>
        <dbReference type="ChEBI" id="CHEBI:58339"/>
        <dbReference type="ChEBI" id="CHEBI:58343"/>
        <dbReference type="ChEBI" id="CHEBI:140317"/>
        <dbReference type="EC" id="2.8.2.1"/>
    </reaction>
    <physiologicalReaction direction="left-to-right" evidence="3">
        <dbReference type="Rhea" id="RHEA:12165"/>
    </physiologicalReaction>
</comment>
<comment type="catalytic activity">
    <reaction evidence="4">
        <text>17beta-estradiol + 3'-phosphoadenylyl sulfate = 17beta-estradiol 3-sulfate + adenosine 3',5'-bisphosphate + H(+)</text>
        <dbReference type="Rhea" id="RHEA:52372"/>
        <dbReference type="ChEBI" id="CHEBI:15378"/>
        <dbReference type="ChEBI" id="CHEBI:16469"/>
        <dbReference type="ChEBI" id="CHEBI:58339"/>
        <dbReference type="ChEBI" id="CHEBI:58343"/>
        <dbReference type="ChEBI" id="CHEBI:136582"/>
    </reaction>
    <physiologicalReaction direction="left-to-right" evidence="3">
        <dbReference type="Rhea" id="RHEA:52373"/>
    </physiologicalReaction>
</comment>
<comment type="catalytic activity">
    <reaction evidence="3">
        <text>4-ethylphenol + 3'-phosphoadenylyl sulfate = 4-ethylphenyl sulfate + adenosine 3',5'-bisphosphate + H(+)</text>
        <dbReference type="Rhea" id="RHEA:70607"/>
        <dbReference type="ChEBI" id="CHEBI:15378"/>
        <dbReference type="ChEBI" id="CHEBI:49584"/>
        <dbReference type="ChEBI" id="CHEBI:58339"/>
        <dbReference type="ChEBI" id="CHEBI:58343"/>
        <dbReference type="ChEBI" id="CHEBI:133681"/>
    </reaction>
    <physiologicalReaction direction="left-to-right" evidence="3">
        <dbReference type="Rhea" id="RHEA:70608"/>
    </physiologicalReaction>
</comment>
<comment type="catalytic activity">
    <reaction evidence="3">
        <text>4-nitrophenol + 3'-phosphoadenylyl sulfate = 4-nitrophenyl sulfate + adenosine 3',5'-bisphosphate</text>
        <dbReference type="Rhea" id="RHEA:66548"/>
        <dbReference type="ChEBI" id="CHEBI:57917"/>
        <dbReference type="ChEBI" id="CHEBI:58339"/>
        <dbReference type="ChEBI" id="CHEBI:58343"/>
        <dbReference type="ChEBI" id="CHEBI:140994"/>
    </reaction>
    <physiologicalReaction direction="left-to-right" evidence="3">
        <dbReference type="Rhea" id="RHEA:66549"/>
    </physiologicalReaction>
</comment>
<comment type="catalytic activity">
    <reaction evidence="3">
        <text>dopamine + 3'-phosphoadenylyl sulfate = dopamine 3-O-sulfate + adenosine 3',5'-bisphosphate + H(+)</text>
        <dbReference type="Rhea" id="RHEA:67880"/>
        <dbReference type="ChEBI" id="CHEBI:15378"/>
        <dbReference type="ChEBI" id="CHEBI:58339"/>
        <dbReference type="ChEBI" id="CHEBI:58343"/>
        <dbReference type="ChEBI" id="CHEBI:59905"/>
        <dbReference type="ChEBI" id="CHEBI:133524"/>
    </reaction>
    <physiologicalReaction direction="left-to-right" evidence="3">
        <dbReference type="Rhea" id="RHEA:67881"/>
    </physiologicalReaction>
</comment>
<comment type="catalytic activity">
    <reaction evidence="3">
        <text>dopamine + 3'-phosphoadenylyl sulfate = dopamine 4-O-sulfate + adenosine 3',5'-bisphosphate + H(+)</text>
        <dbReference type="Rhea" id="RHEA:67884"/>
        <dbReference type="ChEBI" id="CHEBI:15378"/>
        <dbReference type="ChEBI" id="CHEBI:58339"/>
        <dbReference type="ChEBI" id="CHEBI:58343"/>
        <dbReference type="ChEBI" id="CHEBI:59905"/>
        <dbReference type="ChEBI" id="CHEBI:133529"/>
    </reaction>
    <physiologicalReaction direction="left-to-right" evidence="3">
        <dbReference type="Rhea" id="RHEA:67885"/>
    </physiologicalReaction>
</comment>
<comment type="catalytic activity">
    <reaction evidence="3">
        <text>3,3',5-triiodo-L-thyronine + 3'-phosphoadenylyl sulfate = 3,3',5-triiodo-L-thyronine sulfate + adenosine 3',5'-bisphosphate + H(+)</text>
        <dbReference type="Rhea" id="RHEA:67876"/>
        <dbReference type="ChEBI" id="CHEBI:15378"/>
        <dbReference type="ChEBI" id="CHEBI:58339"/>
        <dbReference type="ChEBI" id="CHEBI:58343"/>
        <dbReference type="ChEBI" id="CHEBI:176511"/>
        <dbReference type="ChEBI" id="CHEBI:533015"/>
    </reaction>
    <physiologicalReaction direction="left-to-right" evidence="3">
        <dbReference type="Rhea" id="RHEA:67877"/>
    </physiologicalReaction>
</comment>
<comment type="catalytic activity">
    <reaction evidence="3">
        <text>3,3',5'-triiodo-L-thyronine + 3'-phosphoadenylyl sulfate = 3,3',5'-triiodo-L-thyronine sulfate + adenosine 3',5'-bisphosphate + H(+)</text>
        <dbReference type="Rhea" id="RHEA:67888"/>
        <dbReference type="ChEBI" id="CHEBI:15378"/>
        <dbReference type="ChEBI" id="CHEBI:57261"/>
        <dbReference type="ChEBI" id="CHEBI:58339"/>
        <dbReference type="ChEBI" id="CHEBI:58343"/>
        <dbReference type="ChEBI" id="CHEBI:176513"/>
    </reaction>
    <physiologicalReaction direction="left-to-right" evidence="3">
        <dbReference type="Rhea" id="RHEA:67889"/>
    </physiologicalReaction>
</comment>
<comment type="catalytic activity">
    <reaction evidence="3">
        <text>3,3'-diiodo-L-thyronine + 3'-phosphoadenylyl sulfate = 3,3'-diiodo-L-thyronine sulfate + adenosine 3',5'-bisphosphate + H(+)</text>
        <dbReference type="Rhea" id="RHEA:67892"/>
        <dbReference type="ChEBI" id="CHEBI:15378"/>
        <dbReference type="ChEBI" id="CHEBI:58339"/>
        <dbReference type="ChEBI" id="CHEBI:58343"/>
        <dbReference type="ChEBI" id="CHEBI:176514"/>
        <dbReference type="ChEBI" id="CHEBI:176515"/>
    </reaction>
    <physiologicalReaction direction="left-to-right" evidence="3">
        <dbReference type="Rhea" id="RHEA:67893"/>
    </physiologicalReaction>
</comment>
<comment type="catalytic activity">
    <reaction evidence="3">
        <text>L-thyroxine + 3'-phosphoadenylyl sulfate = L-thyroxine sulfate + adenosine 3',5'-bisphosphate + H(+)</text>
        <dbReference type="Rhea" id="RHEA:83575"/>
        <dbReference type="ChEBI" id="CHEBI:15378"/>
        <dbReference type="ChEBI" id="CHEBI:58339"/>
        <dbReference type="ChEBI" id="CHEBI:58343"/>
        <dbReference type="ChEBI" id="CHEBI:58448"/>
        <dbReference type="ChEBI" id="CHEBI:176512"/>
    </reaction>
    <physiologicalReaction direction="left-to-right" evidence="3">
        <dbReference type="Rhea" id="RHEA:83576"/>
    </physiologicalReaction>
</comment>
<comment type="subunit">
    <text evidence="3">Homodimer.</text>
</comment>
<comment type="subcellular location">
    <subcellularLocation>
        <location evidence="2">Cytoplasm</location>
    </subcellularLocation>
</comment>
<comment type="tissue specificity">
    <text evidence="4">Ubiquitously expressed in canine tissues with highest expression in male and female liver.</text>
</comment>
<comment type="similarity">
    <text evidence="5">Belongs to the sulfotransferase 1 family.</text>
</comment>
<organism>
    <name type="scientific">Canis lupus familiaris</name>
    <name type="common">Dog</name>
    <name type="synonym">Canis familiaris</name>
    <dbReference type="NCBI Taxonomy" id="9615"/>
    <lineage>
        <taxon>Eukaryota</taxon>
        <taxon>Metazoa</taxon>
        <taxon>Chordata</taxon>
        <taxon>Craniata</taxon>
        <taxon>Vertebrata</taxon>
        <taxon>Euteleostomi</taxon>
        <taxon>Mammalia</taxon>
        <taxon>Eutheria</taxon>
        <taxon>Laurasiatheria</taxon>
        <taxon>Carnivora</taxon>
        <taxon>Caniformia</taxon>
        <taxon>Canidae</taxon>
        <taxon>Canis</taxon>
    </lineage>
</organism>
<gene>
    <name type="primary">SULT1A1</name>
</gene>
<accession>Q29476</accession>
<reference key="1">
    <citation type="submission" date="1994-04" db="EMBL/GenBank/DDBJ databases">
        <title>Molecular cloning and sequencing of a dog liver cDNA (dPST-1) encoding a phenol sulfotransferase.</title>
        <authorList>
            <person name="Satsukawa M."/>
            <person name="Ogura K."/>
            <person name="Nakamura T."/>
            <person name="Watabe T."/>
        </authorList>
    </citation>
    <scope>NUCLEOTIDE SEQUENCE [MRNA]</scope>
    <source>
        <strain>Beagle</strain>
        <tissue>Liver</tissue>
    </source>
</reference>
<reference key="2">
    <citation type="journal article" date="2002" name="Arch. Biochem. Biophys.">
        <title>Canine sulfotransferase SULT1A1: molecular cloning, expression, and characterization.</title>
        <authorList>
            <person name="Tsoi C."/>
            <person name="Morgenstern R."/>
            <person name="Swedmark S."/>
        </authorList>
    </citation>
    <scope>NUCLEOTIDE SEQUENCE [MRNA]</scope>
    <scope>TISSUE SPECIFICITY</scope>
    <scope>CATALYTIC ACTIVITY</scope>
    <scope>FUNCTION</scope>
    <source>
        <tissue>Liver</tissue>
    </source>
</reference>
<dbReference type="EC" id="2.8.2.1" evidence="4"/>
<dbReference type="EMBL" id="D29807">
    <property type="protein sequence ID" value="BAA06190.1"/>
    <property type="molecule type" value="mRNA"/>
</dbReference>
<dbReference type="EMBL" id="AY069922">
    <property type="protein sequence ID" value="AAL57717.1"/>
    <property type="molecule type" value="mRNA"/>
</dbReference>
<dbReference type="RefSeq" id="NP_001003223.1">
    <property type="nucleotide sequence ID" value="NM_001003223.1"/>
</dbReference>
<dbReference type="RefSeq" id="XP_013969862.1">
    <property type="nucleotide sequence ID" value="XM_014114387.1"/>
</dbReference>
<dbReference type="RefSeq" id="XP_038523484.1">
    <property type="nucleotide sequence ID" value="XM_038667556.1"/>
</dbReference>
<dbReference type="SMR" id="Q29476"/>
<dbReference type="FunCoup" id="Q29476">
    <property type="interactions" value="6"/>
</dbReference>
<dbReference type="STRING" id="9615.ENSCAFP00000036703"/>
<dbReference type="PaxDb" id="9612-ENSCAFP00000025221"/>
<dbReference type="Ensembl" id="ENSCAFT00000027121.3">
    <property type="protein sequence ID" value="ENSCAFP00000025221.1"/>
    <property type="gene ID" value="ENSCAFG00000017122.5"/>
</dbReference>
<dbReference type="Ensembl" id="ENSCAFT00030001324.1">
    <property type="protein sequence ID" value="ENSCAFP00030001165.1"/>
    <property type="gene ID" value="ENSCAFG00030000768.1"/>
</dbReference>
<dbReference type="Ensembl" id="ENSCAFT00040000610.1">
    <property type="protein sequence ID" value="ENSCAFP00040000504.1"/>
    <property type="gene ID" value="ENSCAFG00040000352.1"/>
</dbReference>
<dbReference type="Ensembl" id="ENSCAFT00845003885.1">
    <property type="protein sequence ID" value="ENSCAFP00845003096.1"/>
    <property type="gene ID" value="ENSCAFG00845002193.1"/>
</dbReference>
<dbReference type="GeneID" id="403892"/>
<dbReference type="KEGG" id="cfa:403892"/>
<dbReference type="CTD" id="6817"/>
<dbReference type="VEuPathDB" id="HostDB:ENSCAFG00845002193"/>
<dbReference type="eggNOG" id="KOG1584">
    <property type="taxonomic scope" value="Eukaryota"/>
</dbReference>
<dbReference type="GeneTree" id="ENSGT00940000162765"/>
<dbReference type="HOGENOM" id="CLU_027239_1_2_1"/>
<dbReference type="InParanoid" id="Q29476"/>
<dbReference type="OMA" id="YNFYNMA"/>
<dbReference type="OrthoDB" id="9521at33554"/>
<dbReference type="TreeFam" id="TF321745"/>
<dbReference type="BRENDA" id="2.8.2.1">
    <property type="organism ID" value="1153"/>
</dbReference>
<dbReference type="Reactome" id="R-CFA-156584">
    <property type="pathway name" value="Cytosolic sulfonation of small molecules"/>
</dbReference>
<dbReference type="Reactome" id="R-CFA-9753281">
    <property type="pathway name" value="Paracetamol ADME"/>
</dbReference>
<dbReference type="Proteomes" id="UP000002254">
    <property type="component" value="Chromosome 6"/>
</dbReference>
<dbReference type="Proteomes" id="UP000694429">
    <property type="component" value="Chromosome 6"/>
</dbReference>
<dbReference type="Proteomes" id="UP000694542">
    <property type="component" value="Chromosome 6"/>
</dbReference>
<dbReference type="Proteomes" id="UP000805418">
    <property type="component" value="Chromosome 6"/>
</dbReference>
<dbReference type="Bgee" id="ENSCAFG00000017122">
    <property type="expression patterns" value="Expressed in jejunum and 47 other cell types or tissues"/>
</dbReference>
<dbReference type="GO" id="GO:0005737">
    <property type="term" value="C:cytoplasm"/>
    <property type="evidence" value="ECO:0000318"/>
    <property type="project" value="GO_Central"/>
</dbReference>
<dbReference type="GO" id="GO:0005829">
    <property type="term" value="C:cytosol"/>
    <property type="evidence" value="ECO:0000250"/>
    <property type="project" value="UniProtKB"/>
</dbReference>
<dbReference type="GO" id="GO:0050656">
    <property type="term" value="F:3'-phosphoadenosine 5'-phosphosulfate binding"/>
    <property type="evidence" value="ECO:0000250"/>
    <property type="project" value="UniProtKB"/>
</dbReference>
<dbReference type="GO" id="GO:0004062">
    <property type="term" value="F:aryl sulfotransferase activity"/>
    <property type="evidence" value="ECO:0000318"/>
    <property type="project" value="GO_Central"/>
</dbReference>
<dbReference type="GO" id="GO:0008146">
    <property type="term" value="F:sulfotransferase activity"/>
    <property type="evidence" value="ECO:0000250"/>
    <property type="project" value="UniProtKB"/>
</dbReference>
<dbReference type="GO" id="GO:0042420">
    <property type="term" value="P:dopamine catabolic process"/>
    <property type="evidence" value="ECO:0000250"/>
    <property type="project" value="UniProtKB"/>
</dbReference>
<dbReference type="GO" id="GO:0008202">
    <property type="term" value="P:steroid metabolic process"/>
    <property type="evidence" value="ECO:0007669"/>
    <property type="project" value="UniProtKB-KW"/>
</dbReference>
<dbReference type="GO" id="GO:0051923">
    <property type="term" value="P:sulfation"/>
    <property type="evidence" value="ECO:0000318"/>
    <property type="project" value="GO_Central"/>
</dbReference>
<dbReference type="GO" id="GO:0042403">
    <property type="term" value="P:thyroid hormone metabolic process"/>
    <property type="evidence" value="ECO:0000250"/>
    <property type="project" value="UniProtKB"/>
</dbReference>
<dbReference type="FunFam" id="3.40.50.300:FF:000433">
    <property type="entry name" value="Estrogen sulfotransferase"/>
    <property type="match status" value="1"/>
</dbReference>
<dbReference type="Gene3D" id="3.40.50.300">
    <property type="entry name" value="P-loop containing nucleotide triphosphate hydrolases"/>
    <property type="match status" value="1"/>
</dbReference>
<dbReference type="InterPro" id="IPR027417">
    <property type="entry name" value="P-loop_NTPase"/>
</dbReference>
<dbReference type="InterPro" id="IPR000863">
    <property type="entry name" value="Sulfotransferase_dom"/>
</dbReference>
<dbReference type="PANTHER" id="PTHR11783">
    <property type="entry name" value="SULFOTRANSFERASE SULT"/>
    <property type="match status" value="1"/>
</dbReference>
<dbReference type="Pfam" id="PF00685">
    <property type="entry name" value="Sulfotransfer_1"/>
    <property type="match status" value="1"/>
</dbReference>
<dbReference type="SUPFAM" id="SSF52540">
    <property type="entry name" value="P-loop containing nucleoside triphosphate hydrolases"/>
    <property type="match status" value="1"/>
</dbReference>
<feature type="chain" id="PRO_0000085126" description="Sulfotransferase 1A1">
    <location>
        <begin position="1"/>
        <end position="295"/>
    </location>
</feature>
<feature type="active site" description="Proton acceptor" evidence="1">
    <location>
        <position position="108"/>
    </location>
</feature>
<feature type="binding site" evidence="3">
    <location>
        <begin position="48"/>
        <end position="53"/>
    </location>
    <ligand>
        <name>3'-phosphoadenylyl sulfate</name>
        <dbReference type="ChEBI" id="CHEBI:58339"/>
    </ligand>
</feature>
<feature type="binding site" evidence="3">
    <location>
        <begin position="106"/>
        <end position="108"/>
    </location>
    <ligand>
        <name>substrate</name>
    </ligand>
</feature>
<feature type="binding site" evidence="3">
    <location>
        <position position="130"/>
    </location>
    <ligand>
        <name>3'-phosphoadenylyl sulfate</name>
        <dbReference type="ChEBI" id="CHEBI:58339"/>
    </ligand>
</feature>
<feature type="binding site" evidence="3">
    <location>
        <position position="138"/>
    </location>
    <ligand>
        <name>3'-phosphoadenylyl sulfate</name>
        <dbReference type="ChEBI" id="CHEBI:58339"/>
    </ligand>
</feature>
<feature type="binding site" evidence="3">
    <location>
        <position position="193"/>
    </location>
    <ligand>
        <name>3'-phosphoadenylyl sulfate</name>
        <dbReference type="ChEBI" id="CHEBI:58339"/>
    </ligand>
</feature>
<feature type="binding site" evidence="3">
    <location>
        <begin position="227"/>
        <end position="232"/>
    </location>
    <ligand>
        <name>3'-phosphoadenylyl sulfate</name>
        <dbReference type="ChEBI" id="CHEBI:58339"/>
    </ligand>
</feature>
<feature type="binding site" evidence="3">
    <location>
        <begin position="255"/>
        <end position="259"/>
    </location>
    <ligand>
        <name>3'-phosphoadenylyl sulfate</name>
        <dbReference type="ChEBI" id="CHEBI:58339"/>
    </ligand>
</feature>
<feature type="modified residue" description="Phosphoserine" evidence="2">
    <location>
        <position position="138"/>
    </location>
</feature>
<evidence type="ECO:0000250" key="1">
    <source>
        <dbReference type="UniProtKB" id="P0DMM9"/>
    </source>
</evidence>
<evidence type="ECO:0000250" key="2">
    <source>
        <dbReference type="UniProtKB" id="P17988"/>
    </source>
</evidence>
<evidence type="ECO:0000250" key="3">
    <source>
        <dbReference type="UniProtKB" id="P50225"/>
    </source>
</evidence>
<evidence type="ECO:0000269" key="4">
    <source>
    </source>
</evidence>
<evidence type="ECO:0000305" key="5"/>
<name>ST1A1_CANLF</name>